<name>ITPA_LEIMA</name>
<feature type="chain" id="PRO_0000413122" description="Inosine triphosphate pyrophosphatase">
    <location>
        <begin position="1"/>
        <end position="234"/>
    </location>
</feature>
<feature type="binding site" evidence="1">
    <location>
        <begin position="11"/>
        <end position="16"/>
    </location>
    <ligand>
        <name>ITP</name>
        <dbReference type="ChEBI" id="CHEBI:61402"/>
    </ligand>
</feature>
<feature type="binding site" evidence="1">
    <location>
        <position position="40"/>
    </location>
    <ligand>
        <name>Mg(2+)</name>
        <dbReference type="ChEBI" id="CHEBI:18420"/>
    </ligand>
</feature>
<feature type="binding site" evidence="1">
    <location>
        <position position="53"/>
    </location>
    <ligand>
        <name>ITP</name>
        <dbReference type="ChEBI" id="CHEBI:61402"/>
    </ligand>
</feature>
<feature type="binding site" evidence="1">
    <location>
        <begin position="81"/>
        <end position="82"/>
    </location>
    <ligand>
        <name>ITP</name>
        <dbReference type="ChEBI" id="CHEBI:61402"/>
    </ligand>
</feature>
<feature type="binding site" evidence="1">
    <location>
        <position position="98"/>
    </location>
    <ligand>
        <name>ITP</name>
        <dbReference type="ChEBI" id="CHEBI:61402"/>
    </ligand>
</feature>
<feature type="binding site" evidence="1">
    <location>
        <begin position="176"/>
        <end position="179"/>
    </location>
    <ligand>
        <name>ITP</name>
        <dbReference type="ChEBI" id="CHEBI:61402"/>
    </ligand>
</feature>
<feature type="binding site" evidence="1">
    <location>
        <position position="203"/>
    </location>
    <ligand>
        <name>ITP</name>
        <dbReference type="ChEBI" id="CHEBI:61402"/>
    </ligand>
</feature>
<feature type="binding site" evidence="1">
    <location>
        <begin position="208"/>
        <end position="209"/>
    </location>
    <ligand>
        <name>ITP</name>
        <dbReference type="ChEBI" id="CHEBI:61402"/>
    </ligand>
</feature>
<comment type="function">
    <text evidence="1">Pyrophosphatase that hydrolyzes non-canonical purine nucleotides such as inosine triphosphate (ITP), deoxyinosine triphosphate (dITP) or xanthosine 5'-triphosphate (XTP) to their respective monophosphate derivatives. The enzyme does not distinguish between the deoxy- and ribose forms. Probably excludes non-canonical purines from RNA and DNA precursor pools, thus preventing their incorporation into RNA and DNA and avoiding chromosomal lesions.</text>
</comment>
<comment type="catalytic activity">
    <reaction evidence="1">
        <text>ITP + H2O = IMP + diphosphate + H(+)</text>
        <dbReference type="Rhea" id="RHEA:29399"/>
        <dbReference type="ChEBI" id="CHEBI:15377"/>
        <dbReference type="ChEBI" id="CHEBI:15378"/>
        <dbReference type="ChEBI" id="CHEBI:33019"/>
        <dbReference type="ChEBI" id="CHEBI:58053"/>
        <dbReference type="ChEBI" id="CHEBI:61402"/>
        <dbReference type="EC" id="3.6.1.66"/>
    </reaction>
    <physiologicalReaction direction="left-to-right" evidence="1">
        <dbReference type="Rhea" id="RHEA:29400"/>
    </physiologicalReaction>
</comment>
<comment type="catalytic activity">
    <reaction evidence="1">
        <text>dITP + H2O = dIMP + diphosphate + H(+)</text>
        <dbReference type="Rhea" id="RHEA:28342"/>
        <dbReference type="ChEBI" id="CHEBI:15377"/>
        <dbReference type="ChEBI" id="CHEBI:15378"/>
        <dbReference type="ChEBI" id="CHEBI:33019"/>
        <dbReference type="ChEBI" id="CHEBI:61194"/>
        <dbReference type="ChEBI" id="CHEBI:61382"/>
        <dbReference type="EC" id="3.6.1.66"/>
    </reaction>
    <physiologicalReaction direction="left-to-right" evidence="1">
        <dbReference type="Rhea" id="RHEA:28343"/>
    </physiologicalReaction>
</comment>
<comment type="catalytic activity">
    <reaction evidence="1">
        <text>XTP + H2O = XMP + diphosphate + H(+)</text>
        <dbReference type="Rhea" id="RHEA:28610"/>
        <dbReference type="ChEBI" id="CHEBI:15377"/>
        <dbReference type="ChEBI" id="CHEBI:15378"/>
        <dbReference type="ChEBI" id="CHEBI:33019"/>
        <dbReference type="ChEBI" id="CHEBI:57464"/>
        <dbReference type="ChEBI" id="CHEBI:61314"/>
        <dbReference type="EC" id="3.6.1.66"/>
    </reaction>
    <physiologicalReaction direction="left-to-right" evidence="1">
        <dbReference type="Rhea" id="RHEA:28611"/>
    </physiologicalReaction>
</comment>
<comment type="cofactor">
    <cofactor evidence="1">
        <name>Mg(2+)</name>
        <dbReference type="ChEBI" id="CHEBI:18420"/>
    </cofactor>
    <cofactor evidence="1">
        <name>Mn(2+)</name>
        <dbReference type="ChEBI" id="CHEBI:29035"/>
    </cofactor>
    <text evidence="1">Binds 1 divalent metal cation per subunit; can use either Mg(2+) or Mn(2+).</text>
</comment>
<comment type="subunit">
    <text evidence="1">Homodimer.</text>
</comment>
<comment type="subcellular location">
    <subcellularLocation>
        <location evidence="1">Cytoplasm</location>
    </subcellularLocation>
</comment>
<comment type="similarity">
    <text evidence="1">Belongs to the HAM1 NTPase family.</text>
</comment>
<reference key="1">
    <citation type="journal article" date="2005" name="Science">
        <title>The genome of the kinetoplastid parasite, Leishmania major.</title>
        <authorList>
            <person name="Ivens A.C."/>
            <person name="Peacock C.S."/>
            <person name="Worthey E.A."/>
            <person name="Murphy L."/>
            <person name="Aggarwal G."/>
            <person name="Berriman M."/>
            <person name="Sisk E."/>
            <person name="Rajandream M.A."/>
            <person name="Adlem E."/>
            <person name="Aert R."/>
            <person name="Anupama A."/>
            <person name="Apostolou Z."/>
            <person name="Attipoe P."/>
            <person name="Bason N."/>
            <person name="Bauser C."/>
            <person name="Beck A."/>
            <person name="Beverley S.M."/>
            <person name="Bianchettin G."/>
            <person name="Borzym K."/>
            <person name="Bothe G."/>
            <person name="Bruschi C.V."/>
            <person name="Collins M."/>
            <person name="Cadag E."/>
            <person name="Ciarloni L."/>
            <person name="Clayton C."/>
            <person name="Coulson R.M.R."/>
            <person name="Cronin A."/>
            <person name="Cruz A.K."/>
            <person name="Davies R.M."/>
            <person name="De Gaudenzi J."/>
            <person name="Dobson D.E."/>
            <person name="Duesterhoeft A."/>
            <person name="Fazelina G."/>
            <person name="Fosker N."/>
            <person name="Frasch A.C."/>
            <person name="Fraser A."/>
            <person name="Fuchs M."/>
            <person name="Gabel C."/>
            <person name="Goble A."/>
            <person name="Goffeau A."/>
            <person name="Harris D."/>
            <person name="Hertz-Fowler C."/>
            <person name="Hilbert H."/>
            <person name="Horn D."/>
            <person name="Huang Y."/>
            <person name="Klages S."/>
            <person name="Knights A."/>
            <person name="Kube M."/>
            <person name="Larke N."/>
            <person name="Litvin L."/>
            <person name="Lord A."/>
            <person name="Louie T."/>
            <person name="Marra M."/>
            <person name="Masuy D."/>
            <person name="Matthews K."/>
            <person name="Michaeli S."/>
            <person name="Mottram J.C."/>
            <person name="Mueller-Auer S."/>
            <person name="Munden H."/>
            <person name="Nelson S."/>
            <person name="Norbertczak H."/>
            <person name="Oliver K."/>
            <person name="O'neil S."/>
            <person name="Pentony M."/>
            <person name="Pohl T.M."/>
            <person name="Price C."/>
            <person name="Purnelle B."/>
            <person name="Quail M.A."/>
            <person name="Rabbinowitsch E."/>
            <person name="Reinhardt R."/>
            <person name="Rieger M."/>
            <person name="Rinta J."/>
            <person name="Robben J."/>
            <person name="Robertson L."/>
            <person name="Ruiz J.C."/>
            <person name="Rutter S."/>
            <person name="Saunders D."/>
            <person name="Schaefer M."/>
            <person name="Schein J."/>
            <person name="Schwartz D.C."/>
            <person name="Seeger K."/>
            <person name="Seyler A."/>
            <person name="Sharp S."/>
            <person name="Shin H."/>
            <person name="Sivam D."/>
            <person name="Squares R."/>
            <person name="Squares S."/>
            <person name="Tosato V."/>
            <person name="Vogt C."/>
            <person name="Volckaert G."/>
            <person name="Wambutt R."/>
            <person name="Warren T."/>
            <person name="Wedler H."/>
            <person name="Woodward J."/>
            <person name="Zhou S."/>
            <person name="Zimmermann W."/>
            <person name="Smith D.F."/>
            <person name="Blackwell J.M."/>
            <person name="Stuart K.D."/>
            <person name="Barrell B.G."/>
            <person name="Myler P.J."/>
        </authorList>
    </citation>
    <scope>NUCLEOTIDE SEQUENCE [LARGE SCALE GENOMIC DNA]</scope>
    <source>
        <strain>MHOM/IL/81/Friedlin</strain>
    </source>
</reference>
<gene>
    <name type="ORF">LMJF_36_4630</name>
</gene>
<keyword id="KW-0963">Cytoplasm</keyword>
<keyword id="KW-0378">Hydrolase</keyword>
<keyword id="KW-0460">Magnesium</keyword>
<keyword id="KW-0464">Manganese</keyword>
<keyword id="KW-0479">Metal-binding</keyword>
<keyword id="KW-0546">Nucleotide metabolism</keyword>
<keyword id="KW-0547">Nucleotide-binding</keyword>
<keyword id="KW-1185">Reference proteome</keyword>
<proteinExistence type="inferred from homology"/>
<dbReference type="EC" id="3.6.1.66" evidence="1"/>
<dbReference type="EMBL" id="FR796432">
    <property type="protein sequence ID" value="CAJ09430.1"/>
    <property type="molecule type" value="Genomic_DNA"/>
</dbReference>
<dbReference type="RefSeq" id="XP_001687047.1">
    <property type="nucleotide sequence ID" value="XM_001686995.1"/>
</dbReference>
<dbReference type="SMR" id="Q4Q0V1"/>
<dbReference type="FunCoup" id="Q4Q0V1">
    <property type="interactions" value="388"/>
</dbReference>
<dbReference type="STRING" id="5664.Q4Q0V1"/>
<dbReference type="EnsemblProtists" id="CAJ09430">
    <property type="protein sequence ID" value="CAJ09430"/>
    <property type="gene ID" value="LMJF_36_4630"/>
</dbReference>
<dbReference type="GeneID" id="5655763"/>
<dbReference type="KEGG" id="lma:LMJF_36_4630"/>
<dbReference type="VEuPathDB" id="TriTrypDB:LmjF.36.4630"/>
<dbReference type="VEuPathDB" id="TriTrypDB:LMJFC_360062300"/>
<dbReference type="VEuPathDB" id="TriTrypDB:LMJLV39_360057800"/>
<dbReference type="VEuPathDB" id="TriTrypDB:LMJSD75_360057600"/>
<dbReference type="eggNOG" id="KOG3222">
    <property type="taxonomic scope" value="Eukaryota"/>
</dbReference>
<dbReference type="HOGENOM" id="CLU_082080_1_1_1"/>
<dbReference type="InParanoid" id="Q4Q0V1"/>
<dbReference type="OMA" id="QWDCVFI"/>
<dbReference type="Proteomes" id="UP000000542">
    <property type="component" value="Chromosome 36"/>
</dbReference>
<dbReference type="GO" id="GO:0005737">
    <property type="term" value="C:cytoplasm"/>
    <property type="evidence" value="ECO:0000318"/>
    <property type="project" value="GO_Central"/>
</dbReference>
<dbReference type="GO" id="GO:0035870">
    <property type="term" value="F:dITP diphosphatase activity"/>
    <property type="evidence" value="ECO:0007669"/>
    <property type="project" value="RHEA"/>
</dbReference>
<dbReference type="GO" id="GO:0036220">
    <property type="term" value="F:ITP diphosphatase activity"/>
    <property type="evidence" value="ECO:0007669"/>
    <property type="project" value="RHEA"/>
</dbReference>
<dbReference type="GO" id="GO:0046872">
    <property type="term" value="F:metal ion binding"/>
    <property type="evidence" value="ECO:0007669"/>
    <property type="project" value="UniProtKB-KW"/>
</dbReference>
<dbReference type="GO" id="GO:0047429">
    <property type="term" value="F:nucleoside triphosphate diphosphatase activity"/>
    <property type="evidence" value="ECO:0000318"/>
    <property type="project" value="GO_Central"/>
</dbReference>
<dbReference type="GO" id="GO:0000166">
    <property type="term" value="F:nucleotide binding"/>
    <property type="evidence" value="ECO:0007669"/>
    <property type="project" value="UniProtKB-KW"/>
</dbReference>
<dbReference type="GO" id="GO:0036222">
    <property type="term" value="F:XTP diphosphatase activity"/>
    <property type="evidence" value="ECO:0007669"/>
    <property type="project" value="RHEA"/>
</dbReference>
<dbReference type="GO" id="GO:0009204">
    <property type="term" value="P:deoxyribonucleoside triphosphate catabolic process"/>
    <property type="evidence" value="ECO:0007669"/>
    <property type="project" value="UniProtKB-UniRule"/>
</dbReference>
<dbReference type="GO" id="GO:0009143">
    <property type="term" value="P:nucleoside triphosphate catabolic process"/>
    <property type="evidence" value="ECO:0000318"/>
    <property type="project" value="GO_Central"/>
</dbReference>
<dbReference type="GO" id="GO:0009117">
    <property type="term" value="P:nucleotide metabolic process"/>
    <property type="evidence" value="ECO:0007669"/>
    <property type="project" value="UniProtKB-KW"/>
</dbReference>
<dbReference type="CDD" id="cd00515">
    <property type="entry name" value="HAM1"/>
    <property type="match status" value="1"/>
</dbReference>
<dbReference type="FunFam" id="3.90.950.10:FF:000022">
    <property type="entry name" value="Inosine triphosphate pyrophosphatase"/>
    <property type="match status" value="1"/>
</dbReference>
<dbReference type="Gene3D" id="3.90.950.10">
    <property type="match status" value="1"/>
</dbReference>
<dbReference type="HAMAP" id="MF_03148">
    <property type="entry name" value="HAM1_NTPase"/>
    <property type="match status" value="1"/>
</dbReference>
<dbReference type="InterPro" id="IPR027502">
    <property type="entry name" value="ITPase"/>
</dbReference>
<dbReference type="InterPro" id="IPR029001">
    <property type="entry name" value="ITPase-like_fam"/>
</dbReference>
<dbReference type="InterPro" id="IPR002637">
    <property type="entry name" value="RdgB/HAM1"/>
</dbReference>
<dbReference type="PANTHER" id="PTHR11067:SF9">
    <property type="entry name" value="INOSINE TRIPHOSPHATE PYROPHOSPHATASE"/>
    <property type="match status" value="1"/>
</dbReference>
<dbReference type="PANTHER" id="PTHR11067">
    <property type="entry name" value="INOSINE TRIPHOSPHATE PYROPHOSPHATASE/HAM1 PROTEIN"/>
    <property type="match status" value="1"/>
</dbReference>
<dbReference type="Pfam" id="PF01725">
    <property type="entry name" value="Ham1p_like"/>
    <property type="match status" value="1"/>
</dbReference>
<dbReference type="SUPFAM" id="SSF52972">
    <property type="entry name" value="ITPase-like"/>
    <property type="match status" value="1"/>
</dbReference>
<sequence>MSTYGKVYLVSGNKGKLAEVQSYLAHANIVVEAVKFDLPETQNSSAEKISWDKAVEAYRVVNKMPVGEPLRHGGTPVLVDDTSLEFDALCGLPGPYIKWFLDRLGVEGLLKMVKGFAAPGEKDSGAAAPAHRGANAVCIISLCHGVEEATGQPLVEQFRGVCRGALPPVPRGGVGFGWDSIFAPEAQTPAYAKTFAEMSVEEKNTLSHRAKALKMLTEYLKTHALELRGTKLVA</sequence>
<protein>
    <recommendedName>
        <fullName evidence="1">Inosine triphosphate pyrophosphatase</fullName>
        <shortName evidence="1">ITPase</shortName>
        <shortName evidence="1">Inosine triphosphatase</shortName>
        <ecNumber evidence="1">3.6.1.66</ecNumber>
    </recommendedName>
    <alternativeName>
        <fullName evidence="1">Non-canonical purine NTP pyrophosphatase</fullName>
    </alternativeName>
    <alternativeName>
        <fullName evidence="1">Non-standard purine NTP pyrophosphatase</fullName>
    </alternativeName>
    <alternativeName>
        <fullName evidence="1">Nucleoside-triphosphate diphosphatase</fullName>
    </alternativeName>
    <alternativeName>
        <fullName evidence="1">Nucleoside-triphosphate pyrophosphatase</fullName>
        <shortName evidence="1">NTPase</shortName>
    </alternativeName>
    <alternativeName>
        <fullName evidence="1">XTP/dITP diphosphatase</fullName>
    </alternativeName>
</protein>
<evidence type="ECO:0000255" key="1">
    <source>
        <dbReference type="HAMAP-Rule" id="MF_03148"/>
    </source>
</evidence>
<organism>
    <name type="scientific">Leishmania major</name>
    <dbReference type="NCBI Taxonomy" id="5664"/>
    <lineage>
        <taxon>Eukaryota</taxon>
        <taxon>Discoba</taxon>
        <taxon>Euglenozoa</taxon>
        <taxon>Kinetoplastea</taxon>
        <taxon>Metakinetoplastina</taxon>
        <taxon>Trypanosomatida</taxon>
        <taxon>Trypanosomatidae</taxon>
        <taxon>Leishmaniinae</taxon>
        <taxon>Leishmania</taxon>
    </lineage>
</organism>
<accession>Q4Q0V1</accession>